<keyword id="KW-0067">ATP-binding</keyword>
<keyword id="KW-0963">Cytoplasm</keyword>
<keyword id="KW-0460">Magnesium</keyword>
<keyword id="KW-0479">Metal-binding</keyword>
<keyword id="KW-0547">Nucleotide-binding</keyword>
<keyword id="KW-0554">One-carbon metabolism</keyword>
<keyword id="KW-0630">Potassium</keyword>
<keyword id="KW-1185">Reference proteome</keyword>
<keyword id="KW-0808">Transferase</keyword>
<feature type="chain" id="PRO_0000302945" description="S-adenosylmethionine synthase">
    <location>
        <begin position="1"/>
        <end position="403"/>
    </location>
</feature>
<feature type="region of interest" description="Flexible loop" evidence="1">
    <location>
        <begin position="104"/>
        <end position="114"/>
    </location>
</feature>
<feature type="binding site" description="in other chain" evidence="1">
    <location>
        <position position="17"/>
    </location>
    <ligand>
        <name>ATP</name>
        <dbReference type="ChEBI" id="CHEBI:30616"/>
        <note>ligand shared between two neighboring subunits</note>
    </ligand>
</feature>
<feature type="binding site" evidence="1">
    <location>
        <position position="19"/>
    </location>
    <ligand>
        <name>Mg(2+)</name>
        <dbReference type="ChEBI" id="CHEBI:18420"/>
    </ligand>
</feature>
<feature type="binding site" evidence="1">
    <location>
        <position position="45"/>
    </location>
    <ligand>
        <name>K(+)</name>
        <dbReference type="ChEBI" id="CHEBI:29103"/>
    </ligand>
</feature>
<feature type="binding site" description="in other chain" evidence="1">
    <location>
        <position position="58"/>
    </location>
    <ligand>
        <name>L-methionine</name>
        <dbReference type="ChEBI" id="CHEBI:57844"/>
        <note>ligand shared between two neighboring subunits</note>
    </ligand>
</feature>
<feature type="binding site" description="in other chain" evidence="1">
    <location>
        <position position="104"/>
    </location>
    <ligand>
        <name>L-methionine</name>
        <dbReference type="ChEBI" id="CHEBI:57844"/>
        <note>ligand shared between two neighboring subunits</note>
    </ligand>
</feature>
<feature type="binding site" description="in other chain" evidence="1">
    <location>
        <begin position="179"/>
        <end position="181"/>
    </location>
    <ligand>
        <name>ATP</name>
        <dbReference type="ChEBI" id="CHEBI:30616"/>
        <note>ligand shared between two neighboring subunits</note>
    </ligand>
</feature>
<feature type="binding site" description="in other chain" evidence="1">
    <location>
        <begin position="250"/>
        <end position="251"/>
    </location>
    <ligand>
        <name>ATP</name>
        <dbReference type="ChEBI" id="CHEBI:30616"/>
        <note>ligand shared between two neighboring subunits</note>
    </ligand>
</feature>
<feature type="binding site" evidence="1">
    <location>
        <position position="259"/>
    </location>
    <ligand>
        <name>ATP</name>
        <dbReference type="ChEBI" id="CHEBI:30616"/>
        <note>ligand shared between two neighboring subunits</note>
    </ligand>
</feature>
<feature type="binding site" evidence="1">
    <location>
        <position position="259"/>
    </location>
    <ligand>
        <name>L-methionine</name>
        <dbReference type="ChEBI" id="CHEBI:57844"/>
        <note>ligand shared between two neighboring subunits</note>
    </ligand>
</feature>
<feature type="binding site" description="in other chain" evidence="1">
    <location>
        <begin position="265"/>
        <end position="266"/>
    </location>
    <ligand>
        <name>ATP</name>
        <dbReference type="ChEBI" id="CHEBI:30616"/>
        <note>ligand shared between two neighboring subunits</note>
    </ligand>
</feature>
<feature type="binding site" evidence="1">
    <location>
        <position position="282"/>
    </location>
    <ligand>
        <name>ATP</name>
        <dbReference type="ChEBI" id="CHEBI:30616"/>
        <note>ligand shared between two neighboring subunits</note>
    </ligand>
</feature>
<feature type="binding site" evidence="1">
    <location>
        <position position="286"/>
    </location>
    <ligand>
        <name>ATP</name>
        <dbReference type="ChEBI" id="CHEBI:30616"/>
        <note>ligand shared between two neighboring subunits</note>
    </ligand>
</feature>
<feature type="binding site" description="in other chain" evidence="1">
    <location>
        <position position="290"/>
    </location>
    <ligand>
        <name>L-methionine</name>
        <dbReference type="ChEBI" id="CHEBI:57844"/>
        <note>ligand shared between two neighboring subunits</note>
    </ligand>
</feature>
<dbReference type="EC" id="2.5.1.6" evidence="1"/>
<dbReference type="EMBL" id="CP000611">
    <property type="protein sequence ID" value="ABQ73144.1"/>
    <property type="molecule type" value="Genomic_DNA"/>
</dbReference>
<dbReference type="RefSeq" id="WP_003900333.1">
    <property type="nucleotide sequence ID" value="NZ_CP016972.1"/>
</dbReference>
<dbReference type="SMR" id="A5U294"/>
<dbReference type="KEGG" id="mra:MRA_1401"/>
<dbReference type="eggNOG" id="COG0192">
    <property type="taxonomic scope" value="Bacteria"/>
</dbReference>
<dbReference type="HOGENOM" id="CLU_041802_1_1_11"/>
<dbReference type="UniPathway" id="UPA00315">
    <property type="reaction ID" value="UER00080"/>
</dbReference>
<dbReference type="Proteomes" id="UP000001988">
    <property type="component" value="Chromosome"/>
</dbReference>
<dbReference type="GO" id="GO:0005737">
    <property type="term" value="C:cytoplasm"/>
    <property type="evidence" value="ECO:0007669"/>
    <property type="project" value="UniProtKB-SubCell"/>
</dbReference>
<dbReference type="GO" id="GO:0005524">
    <property type="term" value="F:ATP binding"/>
    <property type="evidence" value="ECO:0007669"/>
    <property type="project" value="UniProtKB-UniRule"/>
</dbReference>
<dbReference type="GO" id="GO:0000287">
    <property type="term" value="F:magnesium ion binding"/>
    <property type="evidence" value="ECO:0007669"/>
    <property type="project" value="UniProtKB-UniRule"/>
</dbReference>
<dbReference type="GO" id="GO:0004478">
    <property type="term" value="F:methionine adenosyltransferase activity"/>
    <property type="evidence" value="ECO:0007669"/>
    <property type="project" value="UniProtKB-UniRule"/>
</dbReference>
<dbReference type="GO" id="GO:0006730">
    <property type="term" value="P:one-carbon metabolic process"/>
    <property type="evidence" value="ECO:0007669"/>
    <property type="project" value="UniProtKB-KW"/>
</dbReference>
<dbReference type="GO" id="GO:0006556">
    <property type="term" value="P:S-adenosylmethionine biosynthetic process"/>
    <property type="evidence" value="ECO:0007669"/>
    <property type="project" value="UniProtKB-UniRule"/>
</dbReference>
<dbReference type="CDD" id="cd18079">
    <property type="entry name" value="S-AdoMet_synt"/>
    <property type="match status" value="1"/>
</dbReference>
<dbReference type="FunFam" id="3.30.300.10:FF:000006">
    <property type="entry name" value="S-adenosylmethionine synthase"/>
    <property type="match status" value="1"/>
</dbReference>
<dbReference type="Gene3D" id="3.30.300.10">
    <property type="match status" value="3"/>
</dbReference>
<dbReference type="HAMAP" id="MF_00086">
    <property type="entry name" value="S_AdoMet_synth1"/>
    <property type="match status" value="1"/>
</dbReference>
<dbReference type="InterPro" id="IPR022631">
    <property type="entry name" value="ADOMET_SYNTHASE_CS"/>
</dbReference>
<dbReference type="InterPro" id="IPR022630">
    <property type="entry name" value="S-AdoMet_synt_C"/>
</dbReference>
<dbReference type="InterPro" id="IPR022629">
    <property type="entry name" value="S-AdoMet_synt_central"/>
</dbReference>
<dbReference type="InterPro" id="IPR022628">
    <property type="entry name" value="S-AdoMet_synt_N"/>
</dbReference>
<dbReference type="InterPro" id="IPR002133">
    <property type="entry name" value="S-AdoMet_synthetase"/>
</dbReference>
<dbReference type="InterPro" id="IPR022636">
    <property type="entry name" value="S-AdoMet_synthetase_sfam"/>
</dbReference>
<dbReference type="NCBIfam" id="TIGR01034">
    <property type="entry name" value="metK"/>
    <property type="match status" value="1"/>
</dbReference>
<dbReference type="PANTHER" id="PTHR11964">
    <property type="entry name" value="S-ADENOSYLMETHIONINE SYNTHETASE"/>
    <property type="match status" value="1"/>
</dbReference>
<dbReference type="Pfam" id="PF02773">
    <property type="entry name" value="S-AdoMet_synt_C"/>
    <property type="match status" value="1"/>
</dbReference>
<dbReference type="Pfam" id="PF02772">
    <property type="entry name" value="S-AdoMet_synt_M"/>
    <property type="match status" value="1"/>
</dbReference>
<dbReference type="Pfam" id="PF00438">
    <property type="entry name" value="S-AdoMet_synt_N"/>
    <property type="match status" value="1"/>
</dbReference>
<dbReference type="PIRSF" id="PIRSF000497">
    <property type="entry name" value="MAT"/>
    <property type="match status" value="1"/>
</dbReference>
<dbReference type="SUPFAM" id="SSF55973">
    <property type="entry name" value="S-adenosylmethionine synthetase"/>
    <property type="match status" value="3"/>
</dbReference>
<dbReference type="PROSITE" id="PS00376">
    <property type="entry name" value="ADOMET_SYNTHASE_1"/>
    <property type="match status" value="1"/>
</dbReference>
<dbReference type="PROSITE" id="PS00377">
    <property type="entry name" value="ADOMET_SYNTHASE_2"/>
    <property type="match status" value="1"/>
</dbReference>
<protein>
    <recommendedName>
        <fullName evidence="1">S-adenosylmethionine synthase</fullName>
        <shortName evidence="1">AdoMet synthase</shortName>
        <ecNumber evidence="1">2.5.1.6</ecNumber>
    </recommendedName>
    <alternativeName>
        <fullName evidence="1">MAT</fullName>
    </alternativeName>
    <alternativeName>
        <fullName evidence="1">Methionine adenosyltransferase</fullName>
    </alternativeName>
</protein>
<proteinExistence type="inferred from homology"/>
<comment type="function">
    <text evidence="1">Catalyzes the formation of S-adenosylmethionine (AdoMet) from methionine and ATP. The overall synthetic reaction is composed of two sequential steps, AdoMet formation and the subsequent tripolyphosphate hydrolysis which occurs prior to release of AdoMet from the enzyme.</text>
</comment>
<comment type="catalytic activity">
    <reaction evidence="1">
        <text>L-methionine + ATP + H2O = S-adenosyl-L-methionine + phosphate + diphosphate</text>
        <dbReference type="Rhea" id="RHEA:21080"/>
        <dbReference type="ChEBI" id="CHEBI:15377"/>
        <dbReference type="ChEBI" id="CHEBI:30616"/>
        <dbReference type="ChEBI" id="CHEBI:33019"/>
        <dbReference type="ChEBI" id="CHEBI:43474"/>
        <dbReference type="ChEBI" id="CHEBI:57844"/>
        <dbReference type="ChEBI" id="CHEBI:59789"/>
        <dbReference type="EC" id="2.5.1.6"/>
    </reaction>
</comment>
<comment type="cofactor">
    <cofactor evidence="1">
        <name>Mg(2+)</name>
        <dbReference type="ChEBI" id="CHEBI:18420"/>
    </cofactor>
    <text evidence="1">Binds 2 divalent ions per subunit.</text>
</comment>
<comment type="cofactor">
    <cofactor evidence="1">
        <name>K(+)</name>
        <dbReference type="ChEBI" id="CHEBI:29103"/>
    </cofactor>
    <text evidence="1">Binds 1 potassium ion per subunit.</text>
</comment>
<comment type="pathway">
    <text evidence="1">Amino-acid biosynthesis; S-adenosyl-L-methionine biosynthesis; S-adenosyl-L-methionine from L-methionine: step 1/1.</text>
</comment>
<comment type="subunit">
    <text evidence="1">Homotetramer; dimer of dimers.</text>
</comment>
<comment type="subcellular location">
    <subcellularLocation>
        <location evidence="1">Cytoplasm</location>
    </subcellularLocation>
</comment>
<comment type="similarity">
    <text evidence="1">Belongs to the AdoMet synthase family.</text>
</comment>
<organism>
    <name type="scientific">Mycobacterium tuberculosis (strain ATCC 25177 / H37Ra)</name>
    <dbReference type="NCBI Taxonomy" id="419947"/>
    <lineage>
        <taxon>Bacteria</taxon>
        <taxon>Bacillati</taxon>
        <taxon>Actinomycetota</taxon>
        <taxon>Actinomycetes</taxon>
        <taxon>Mycobacteriales</taxon>
        <taxon>Mycobacteriaceae</taxon>
        <taxon>Mycobacterium</taxon>
        <taxon>Mycobacterium tuberculosis complex</taxon>
    </lineage>
</organism>
<sequence length="403" mass="43047">MSEKGRLFTSESVTEGHPDKICDAISDSVLDALLAADPRSRVAVETLVTTGQVHVVGEVTTSAKEAFADITNTVRARILEIGYDSSDKGFDGATCGVNIGIGAQSPDIAQGVDTAHEARVEGAADPLDSQGAGDQGLMFGYAINATPELMPLPIALAHRLSRRLTEVRKNGVLPYLRPDGKTQVTIAYEDNVPVRLDTVVISTQHAADIDLEKTLDPDIREKVLNTVLDDLAHETLDASTVRVLVNPTGKFVLGGPMGDAGLTGRKIIVDTYGGWARHGGGAFSGKDPSKVDRSAAYAMRWVAKNVVAAGLAERVEVQVAYAIGKAAPVGLFVETFGTETEDPVKIEKAIGEVFDLRPGAIIRDLNLLRPIYAPTAAYGHFGRTDVELPWEQLDKVDDLKRAI</sequence>
<reference key="1">
    <citation type="journal article" date="2008" name="PLoS ONE">
        <title>Genetic basis of virulence attenuation revealed by comparative genomic analysis of Mycobacterium tuberculosis strain H37Ra versus H37Rv.</title>
        <authorList>
            <person name="Zheng H."/>
            <person name="Lu L."/>
            <person name="Wang B."/>
            <person name="Pu S."/>
            <person name="Zhang X."/>
            <person name="Zhu G."/>
            <person name="Shi W."/>
            <person name="Zhang L."/>
            <person name="Wang H."/>
            <person name="Wang S."/>
            <person name="Zhao G."/>
            <person name="Zhang Y."/>
        </authorList>
    </citation>
    <scope>NUCLEOTIDE SEQUENCE [LARGE SCALE GENOMIC DNA]</scope>
    <source>
        <strain>ATCC 25177 / H37Ra</strain>
    </source>
</reference>
<gene>
    <name evidence="1" type="primary">metK</name>
    <name type="ordered locus">MRA_1401</name>
</gene>
<evidence type="ECO:0000255" key="1">
    <source>
        <dbReference type="HAMAP-Rule" id="MF_00086"/>
    </source>
</evidence>
<accession>A5U294</accession>
<name>METK_MYCTA</name>